<name>CYOE_FRATN</name>
<dbReference type="EC" id="2.5.1.141" evidence="1"/>
<dbReference type="EMBL" id="CP000439">
    <property type="protein sequence ID" value="ABK89109.1"/>
    <property type="molecule type" value="Genomic_DNA"/>
</dbReference>
<dbReference type="RefSeq" id="WP_003027258.1">
    <property type="nucleotide sequence ID" value="NZ_CP009633.1"/>
</dbReference>
<dbReference type="SMR" id="A0Q4E4"/>
<dbReference type="KEGG" id="ftn:FTN_0199"/>
<dbReference type="KEGG" id="ftx:AW25_1847"/>
<dbReference type="BioCyc" id="FTUL401614:G1G75-207-MONOMER"/>
<dbReference type="UniPathway" id="UPA00834">
    <property type="reaction ID" value="UER00712"/>
</dbReference>
<dbReference type="Proteomes" id="UP000000762">
    <property type="component" value="Chromosome"/>
</dbReference>
<dbReference type="GO" id="GO:0005886">
    <property type="term" value="C:plasma membrane"/>
    <property type="evidence" value="ECO:0007669"/>
    <property type="project" value="UniProtKB-SubCell"/>
</dbReference>
<dbReference type="GO" id="GO:0008495">
    <property type="term" value="F:protoheme IX farnesyltransferase activity"/>
    <property type="evidence" value="ECO:0007669"/>
    <property type="project" value="UniProtKB-UniRule"/>
</dbReference>
<dbReference type="GO" id="GO:0048034">
    <property type="term" value="P:heme O biosynthetic process"/>
    <property type="evidence" value="ECO:0007669"/>
    <property type="project" value="UniProtKB-UniRule"/>
</dbReference>
<dbReference type="CDD" id="cd13957">
    <property type="entry name" value="PT_UbiA_Cox10"/>
    <property type="match status" value="1"/>
</dbReference>
<dbReference type="Gene3D" id="1.10.357.140">
    <property type="entry name" value="UbiA prenyltransferase"/>
    <property type="match status" value="1"/>
</dbReference>
<dbReference type="HAMAP" id="MF_00154">
    <property type="entry name" value="CyoE_CtaB"/>
    <property type="match status" value="1"/>
</dbReference>
<dbReference type="InterPro" id="IPR006369">
    <property type="entry name" value="Protohaem_IX_farnesylTrfase"/>
</dbReference>
<dbReference type="InterPro" id="IPR000537">
    <property type="entry name" value="UbiA_prenyltransferase"/>
</dbReference>
<dbReference type="InterPro" id="IPR030470">
    <property type="entry name" value="UbiA_prenylTrfase_CS"/>
</dbReference>
<dbReference type="InterPro" id="IPR044878">
    <property type="entry name" value="UbiA_sf"/>
</dbReference>
<dbReference type="NCBIfam" id="TIGR01473">
    <property type="entry name" value="cyoE_ctaB"/>
    <property type="match status" value="1"/>
</dbReference>
<dbReference type="NCBIfam" id="NF003348">
    <property type="entry name" value="PRK04375.1-1"/>
    <property type="match status" value="1"/>
</dbReference>
<dbReference type="PANTHER" id="PTHR43448">
    <property type="entry name" value="PROTOHEME IX FARNESYLTRANSFERASE, MITOCHONDRIAL"/>
    <property type="match status" value="1"/>
</dbReference>
<dbReference type="PANTHER" id="PTHR43448:SF2">
    <property type="entry name" value="PROTOHEME IX FARNESYLTRANSFERASE, MITOCHONDRIAL"/>
    <property type="match status" value="1"/>
</dbReference>
<dbReference type="Pfam" id="PF01040">
    <property type="entry name" value="UbiA"/>
    <property type="match status" value="1"/>
</dbReference>
<dbReference type="PROSITE" id="PS00943">
    <property type="entry name" value="UBIA"/>
    <property type="match status" value="1"/>
</dbReference>
<sequence length="282" mass="31543">MYFKRYLQLAKPGIIFGNLITLTGGFLLATHREIGFEYLPLFVYVMIGVALMIAAGCVFNNIYDKDIDSSMTRTQNRPLVTGDISVIQATIYGTILLILSCLVLYYLVNLLTLWIIIIGFIVYVGIYTVSKRLTIHATVLGGISGAIPPVAGYTAVVNILDYNALALFLILFFWQIPHSYAIAMLYIDDYKKVKLPMLPIVKGIAYTKKIMLFYLALFVVSCALPAVLGSADLFSFIVCMLVALFWMYKSIQSYRTDTDRVFAKTVFKFSIIVITAICLTMG</sequence>
<gene>
    <name evidence="1" type="primary">cyoE</name>
    <name type="ordered locus">FTN_0199</name>
</gene>
<protein>
    <recommendedName>
        <fullName evidence="1">Protoheme IX farnesyltransferase</fullName>
        <ecNumber evidence="1">2.5.1.141</ecNumber>
    </recommendedName>
    <alternativeName>
        <fullName evidence="1">Heme B farnesyltransferase</fullName>
    </alternativeName>
    <alternativeName>
        <fullName evidence="1">Heme O synthase</fullName>
    </alternativeName>
</protein>
<feature type="chain" id="PRO_0000326898" description="Protoheme IX farnesyltransferase">
    <location>
        <begin position="1"/>
        <end position="282"/>
    </location>
</feature>
<feature type="transmembrane region" description="Helical" evidence="1">
    <location>
        <begin position="9"/>
        <end position="29"/>
    </location>
</feature>
<feature type="transmembrane region" description="Helical" evidence="1">
    <location>
        <begin position="39"/>
        <end position="59"/>
    </location>
</feature>
<feature type="transmembrane region" description="Helical" evidence="1">
    <location>
        <begin position="79"/>
        <end position="99"/>
    </location>
</feature>
<feature type="transmembrane region" description="Helical" evidence="1">
    <location>
        <begin position="102"/>
        <end position="122"/>
    </location>
</feature>
<feature type="transmembrane region" description="Helical" evidence="1">
    <location>
        <begin position="139"/>
        <end position="159"/>
    </location>
</feature>
<feature type="transmembrane region" description="Helical" evidence="1">
    <location>
        <begin position="165"/>
        <end position="185"/>
    </location>
</feature>
<feature type="transmembrane region" description="Helical" evidence="1">
    <location>
        <begin position="210"/>
        <end position="230"/>
    </location>
</feature>
<feature type="transmembrane region" description="Helical" evidence="1">
    <location>
        <begin position="231"/>
        <end position="251"/>
    </location>
</feature>
<feature type="transmembrane region" description="Helical" evidence="1">
    <location>
        <begin position="261"/>
        <end position="281"/>
    </location>
</feature>
<reference key="1">
    <citation type="journal article" date="2007" name="Genome Biol.">
        <title>Comparison of Francisella tularensis genomes reveals evolutionary events associated with the emergence of human pathogenic strains.</title>
        <authorList>
            <person name="Rohmer L."/>
            <person name="Fong C."/>
            <person name="Abmayr S."/>
            <person name="Wasnick M."/>
            <person name="Larson Freeman T.J."/>
            <person name="Radey M."/>
            <person name="Guina T."/>
            <person name="Svensson K."/>
            <person name="Hayden H.S."/>
            <person name="Jacobs M."/>
            <person name="Gallagher L.A."/>
            <person name="Manoil C."/>
            <person name="Ernst R.K."/>
            <person name="Drees B."/>
            <person name="Buckley D."/>
            <person name="Haugen E."/>
            <person name="Bovee D."/>
            <person name="Zhou Y."/>
            <person name="Chang J."/>
            <person name="Levy R."/>
            <person name="Lim R."/>
            <person name="Gillett W."/>
            <person name="Guenthener D."/>
            <person name="Kang A."/>
            <person name="Shaffer S.A."/>
            <person name="Taylor G."/>
            <person name="Chen J."/>
            <person name="Gallis B."/>
            <person name="D'Argenio D.A."/>
            <person name="Forsman M."/>
            <person name="Olson M.V."/>
            <person name="Goodlett D.R."/>
            <person name="Kaul R."/>
            <person name="Miller S.I."/>
            <person name="Brittnacher M.J."/>
        </authorList>
    </citation>
    <scope>NUCLEOTIDE SEQUENCE [LARGE SCALE GENOMIC DNA]</scope>
    <source>
        <strain>U112</strain>
    </source>
</reference>
<proteinExistence type="inferred from homology"/>
<comment type="function">
    <text evidence="1">Converts heme B (protoheme IX) to heme O by substitution of the vinyl group on carbon 2 of heme B porphyrin ring with a hydroxyethyl farnesyl side group.</text>
</comment>
<comment type="catalytic activity">
    <reaction evidence="1">
        <text>heme b + (2E,6E)-farnesyl diphosphate + H2O = Fe(II)-heme o + diphosphate</text>
        <dbReference type="Rhea" id="RHEA:28070"/>
        <dbReference type="ChEBI" id="CHEBI:15377"/>
        <dbReference type="ChEBI" id="CHEBI:33019"/>
        <dbReference type="ChEBI" id="CHEBI:60344"/>
        <dbReference type="ChEBI" id="CHEBI:60530"/>
        <dbReference type="ChEBI" id="CHEBI:175763"/>
        <dbReference type="EC" id="2.5.1.141"/>
    </reaction>
</comment>
<comment type="pathway">
    <text evidence="1">Porphyrin-containing compound metabolism; heme O biosynthesis; heme O from protoheme: step 1/1.</text>
</comment>
<comment type="subcellular location">
    <subcellularLocation>
        <location evidence="1">Cell inner membrane</location>
        <topology evidence="1">Multi-pass membrane protein</topology>
    </subcellularLocation>
</comment>
<comment type="miscellaneous">
    <text evidence="1">Carbon 2 of the heme B porphyrin ring is defined according to the Fischer nomenclature.</text>
</comment>
<comment type="similarity">
    <text evidence="1">Belongs to the UbiA prenyltransferase family. Protoheme IX farnesyltransferase subfamily.</text>
</comment>
<organism>
    <name type="scientific">Francisella tularensis subsp. novicida (strain U112)</name>
    <dbReference type="NCBI Taxonomy" id="401614"/>
    <lineage>
        <taxon>Bacteria</taxon>
        <taxon>Pseudomonadati</taxon>
        <taxon>Pseudomonadota</taxon>
        <taxon>Gammaproteobacteria</taxon>
        <taxon>Thiotrichales</taxon>
        <taxon>Francisellaceae</taxon>
        <taxon>Francisella</taxon>
    </lineage>
</organism>
<keyword id="KW-0997">Cell inner membrane</keyword>
<keyword id="KW-1003">Cell membrane</keyword>
<keyword id="KW-0350">Heme biosynthesis</keyword>
<keyword id="KW-0472">Membrane</keyword>
<keyword id="KW-0808">Transferase</keyword>
<keyword id="KW-0812">Transmembrane</keyword>
<keyword id="KW-1133">Transmembrane helix</keyword>
<accession>A0Q4E4</accession>
<evidence type="ECO:0000255" key="1">
    <source>
        <dbReference type="HAMAP-Rule" id="MF_00154"/>
    </source>
</evidence>